<feature type="chain" id="PRO_0000420596" description="Prohibitin-1, mitochondrial">
    <location>
        <begin position="1"/>
        <end position="288"/>
    </location>
</feature>
<feature type="topological domain" description="Mitochondrial matrix" evidence="2">
    <location>
        <begin position="1"/>
        <end position="10"/>
    </location>
</feature>
<feature type="transmembrane region" description="Helical; Signal-anchor for type II membrane protein" evidence="2">
    <location>
        <begin position="11"/>
        <end position="30"/>
    </location>
</feature>
<feature type="topological domain" description="Mitochondrial intermembrane" evidence="2">
    <location>
        <begin position="31"/>
        <end position="288"/>
    </location>
</feature>
<feature type="coiled-coil region" evidence="2">
    <location>
        <begin position="186"/>
        <end position="219"/>
    </location>
</feature>
<comment type="function">
    <text evidence="1">Prohibitin probably acts as a holdase/unfoldase for the stabilization of newly synthesized mitochondrial proteins.</text>
</comment>
<comment type="subunit">
    <text evidence="3 5 6">Component of a prohibitin multimeric complex in mitochondrial membranes.</text>
</comment>
<comment type="subcellular location">
    <subcellularLocation>
        <location evidence="3 4 5 6 7">Mitochondrion inner membrane</location>
        <topology evidence="3 4 5 6 7">Single-pass type II membrane protein</topology>
    </subcellularLocation>
</comment>
<comment type="tissue specificity">
    <text evidence="5">Mostly expressed in proliferative tissues, including vasculature, shoot and root apical tissues.</text>
</comment>
<comment type="similarity">
    <text evidence="8">Belongs to the prohibitin family.</text>
</comment>
<sequence>MNNVKVPKIPGGGAISTLLKVGIIGGLGLYGATHSLYNVEGGHRAIMFNRLVGIKDKVYPEGTHLMIPWFERPVIYDVRARPYLVESTSGSRDLQMVKIGLRVLTRPMADQLPEIYRSLGENYSERVLPSIINETLKAVVAQYNASQLITQREAVSREIRKILTERAANFNVALDDVSITNLTFGKEFTAAIEAKQVAAQEAERAKFIVEKAEQDKRSAVIRAQGEAKSAQLIGQAIANNQAFITLRKIEAAREIAQTIANSANKVYLSSDDLLLNLQGMNLDVDAKN</sequence>
<reference key="1">
    <citation type="submission" date="1996-08" db="EMBL/GenBank/DDBJ databases">
        <title>Arabidopsis genes encoding prohibitin: importance for early development.</title>
        <authorList>
            <person name="Sun L."/>
            <person name="Goodman H.M."/>
        </authorList>
    </citation>
    <scope>NUCLEOTIDE SEQUENCE [GENOMIC DNA / MRNA]</scope>
    <source>
        <strain>cv. C24</strain>
        <strain>cv. Columbia</strain>
    </source>
</reference>
<reference key="2">
    <citation type="journal article" date="1999" name="Nature">
        <title>Sequence and analysis of chromosome 4 of the plant Arabidopsis thaliana.</title>
        <authorList>
            <person name="Mayer K.F.X."/>
            <person name="Schueller C."/>
            <person name="Wambutt R."/>
            <person name="Murphy G."/>
            <person name="Volckaert G."/>
            <person name="Pohl T."/>
            <person name="Duesterhoeft A."/>
            <person name="Stiekema W."/>
            <person name="Entian K.-D."/>
            <person name="Terryn N."/>
            <person name="Harris B."/>
            <person name="Ansorge W."/>
            <person name="Brandt P."/>
            <person name="Grivell L.A."/>
            <person name="Rieger M."/>
            <person name="Weichselgartner M."/>
            <person name="de Simone V."/>
            <person name="Obermaier B."/>
            <person name="Mache R."/>
            <person name="Mueller M."/>
            <person name="Kreis M."/>
            <person name="Delseny M."/>
            <person name="Puigdomenech P."/>
            <person name="Watson M."/>
            <person name="Schmidtheini T."/>
            <person name="Reichert B."/>
            <person name="Portetelle D."/>
            <person name="Perez-Alonso M."/>
            <person name="Boutry M."/>
            <person name="Bancroft I."/>
            <person name="Vos P."/>
            <person name="Hoheisel J."/>
            <person name="Zimmermann W."/>
            <person name="Wedler H."/>
            <person name="Ridley P."/>
            <person name="Langham S.-A."/>
            <person name="McCullagh B."/>
            <person name="Bilham L."/>
            <person name="Robben J."/>
            <person name="van der Schueren J."/>
            <person name="Grymonprez B."/>
            <person name="Chuang Y.-J."/>
            <person name="Vandenbussche F."/>
            <person name="Braeken M."/>
            <person name="Weltjens I."/>
            <person name="Voet M."/>
            <person name="Bastiaens I."/>
            <person name="Aert R."/>
            <person name="Defoor E."/>
            <person name="Weitzenegger T."/>
            <person name="Bothe G."/>
            <person name="Ramsperger U."/>
            <person name="Hilbert H."/>
            <person name="Braun M."/>
            <person name="Holzer E."/>
            <person name="Brandt A."/>
            <person name="Peters S."/>
            <person name="van Staveren M."/>
            <person name="Dirkse W."/>
            <person name="Mooijman P."/>
            <person name="Klein Lankhorst R."/>
            <person name="Rose M."/>
            <person name="Hauf J."/>
            <person name="Koetter P."/>
            <person name="Berneiser S."/>
            <person name="Hempel S."/>
            <person name="Feldpausch M."/>
            <person name="Lamberth S."/>
            <person name="Van den Daele H."/>
            <person name="De Keyser A."/>
            <person name="Buysshaert C."/>
            <person name="Gielen J."/>
            <person name="Villarroel R."/>
            <person name="De Clercq R."/>
            <person name="van Montagu M."/>
            <person name="Rogers J."/>
            <person name="Cronin A."/>
            <person name="Quail M.A."/>
            <person name="Bray-Allen S."/>
            <person name="Clark L."/>
            <person name="Doggett J."/>
            <person name="Hall S."/>
            <person name="Kay M."/>
            <person name="Lennard N."/>
            <person name="McLay K."/>
            <person name="Mayes R."/>
            <person name="Pettett A."/>
            <person name="Rajandream M.A."/>
            <person name="Lyne M."/>
            <person name="Benes V."/>
            <person name="Rechmann S."/>
            <person name="Borkova D."/>
            <person name="Bloecker H."/>
            <person name="Scharfe M."/>
            <person name="Grimm M."/>
            <person name="Loehnert T.-H."/>
            <person name="Dose S."/>
            <person name="de Haan M."/>
            <person name="Maarse A.C."/>
            <person name="Schaefer M."/>
            <person name="Mueller-Auer S."/>
            <person name="Gabel C."/>
            <person name="Fuchs M."/>
            <person name="Fartmann B."/>
            <person name="Granderath K."/>
            <person name="Dauner D."/>
            <person name="Herzl A."/>
            <person name="Neumann S."/>
            <person name="Argiriou A."/>
            <person name="Vitale D."/>
            <person name="Liguori R."/>
            <person name="Piravandi E."/>
            <person name="Massenet O."/>
            <person name="Quigley F."/>
            <person name="Clabauld G."/>
            <person name="Muendlein A."/>
            <person name="Felber R."/>
            <person name="Schnabl S."/>
            <person name="Hiller R."/>
            <person name="Schmidt W."/>
            <person name="Lecharny A."/>
            <person name="Aubourg S."/>
            <person name="Chefdor F."/>
            <person name="Cooke R."/>
            <person name="Berger C."/>
            <person name="Monfort A."/>
            <person name="Casacuberta E."/>
            <person name="Gibbons T."/>
            <person name="Weber N."/>
            <person name="Vandenbol M."/>
            <person name="Bargues M."/>
            <person name="Terol J."/>
            <person name="Torres A."/>
            <person name="Perez-Perez A."/>
            <person name="Purnelle B."/>
            <person name="Bent E."/>
            <person name="Johnson S."/>
            <person name="Tacon D."/>
            <person name="Jesse T."/>
            <person name="Heijnen L."/>
            <person name="Schwarz S."/>
            <person name="Scholler P."/>
            <person name="Heber S."/>
            <person name="Francs P."/>
            <person name="Bielke C."/>
            <person name="Frishman D."/>
            <person name="Haase D."/>
            <person name="Lemcke K."/>
            <person name="Mewes H.-W."/>
            <person name="Stocker S."/>
            <person name="Zaccaria P."/>
            <person name="Bevan M."/>
            <person name="Wilson R.K."/>
            <person name="de la Bastide M."/>
            <person name="Habermann K."/>
            <person name="Parnell L."/>
            <person name="Dedhia N."/>
            <person name="Gnoj L."/>
            <person name="Schutz K."/>
            <person name="Huang E."/>
            <person name="Spiegel L."/>
            <person name="Sekhon M."/>
            <person name="Murray J."/>
            <person name="Sheet P."/>
            <person name="Cordes M."/>
            <person name="Abu-Threideh J."/>
            <person name="Stoneking T."/>
            <person name="Kalicki J."/>
            <person name="Graves T."/>
            <person name="Harmon G."/>
            <person name="Edwards J."/>
            <person name="Latreille P."/>
            <person name="Courtney L."/>
            <person name="Cloud J."/>
            <person name="Abbott A."/>
            <person name="Scott K."/>
            <person name="Johnson D."/>
            <person name="Minx P."/>
            <person name="Bentley D."/>
            <person name="Fulton B."/>
            <person name="Miller N."/>
            <person name="Greco T."/>
            <person name="Kemp K."/>
            <person name="Kramer J."/>
            <person name="Fulton L."/>
            <person name="Mardis E."/>
            <person name="Dante M."/>
            <person name="Pepin K."/>
            <person name="Hillier L.W."/>
            <person name="Nelson J."/>
            <person name="Spieth J."/>
            <person name="Ryan E."/>
            <person name="Andrews S."/>
            <person name="Geisel C."/>
            <person name="Layman D."/>
            <person name="Du H."/>
            <person name="Ali J."/>
            <person name="Berghoff A."/>
            <person name="Jones K."/>
            <person name="Drone K."/>
            <person name="Cotton M."/>
            <person name="Joshu C."/>
            <person name="Antonoiu B."/>
            <person name="Zidanic M."/>
            <person name="Strong C."/>
            <person name="Sun H."/>
            <person name="Lamar B."/>
            <person name="Yordan C."/>
            <person name="Ma P."/>
            <person name="Zhong J."/>
            <person name="Preston R."/>
            <person name="Vil D."/>
            <person name="Shekher M."/>
            <person name="Matero A."/>
            <person name="Shah R."/>
            <person name="Swaby I.K."/>
            <person name="O'Shaughnessy A."/>
            <person name="Rodriguez M."/>
            <person name="Hoffman J."/>
            <person name="Till S."/>
            <person name="Granat S."/>
            <person name="Shohdy N."/>
            <person name="Hasegawa A."/>
            <person name="Hameed A."/>
            <person name="Lodhi M."/>
            <person name="Johnson A."/>
            <person name="Chen E."/>
            <person name="Marra M.A."/>
            <person name="Martienssen R."/>
            <person name="McCombie W.R."/>
        </authorList>
    </citation>
    <scope>NUCLEOTIDE SEQUENCE [LARGE SCALE GENOMIC DNA]</scope>
    <source>
        <strain>cv. Columbia</strain>
    </source>
</reference>
<reference key="3">
    <citation type="journal article" date="2017" name="Plant J.">
        <title>Araport11: a complete reannotation of the Arabidopsis thaliana reference genome.</title>
        <authorList>
            <person name="Cheng C.Y."/>
            <person name="Krishnakumar V."/>
            <person name="Chan A.P."/>
            <person name="Thibaud-Nissen F."/>
            <person name="Schobel S."/>
            <person name="Town C.D."/>
        </authorList>
    </citation>
    <scope>GENOME REANNOTATION</scope>
    <source>
        <strain>cv. Columbia</strain>
    </source>
</reference>
<reference key="4">
    <citation type="journal article" date="2003" name="Science">
        <title>Empirical analysis of transcriptional activity in the Arabidopsis genome.</title>
        <authorList>
            <person name="Yamada K."/>
            <person name="Lim J."/>
            <person name="Dale J.M."/>
            <person name="Chen H."/>
            <person name="Shinn P."/>
            <person name="Palm C.J."/>
            <person name="Southwick A.M."/>
            <person name="Wu H.C."/>
            <person name="Kim C.J."/>
            <person name="Nguyen M."/>
            <person name="Pham P.K."/>
            <person name="Cheuk R.F."/>
            <person name="Karlin-Newmann G."/>
            <person name="Liu S.X."/>
            <person name="Lam B."/>
            <person name="Sakano H."/>
            <person name="Wu T."/>
            <person name="Yu G."/>
            <person name="Miranda M."/>
            <person name="Quach H.L."/>
            <person name="Tripp M."/>
            <person name="Chang C.H."/>
            <person name="Lee J.M."/>
            <person name="Toriumi M.J."/>
            <person name="Chan M.M."/>
            <person name="Tang C.C."/>
            <person name="Onodera C.S."/>
            <person name="Deng J.M."/>
            <person name="Akiyama K."/>
            <person name="Ansari Y."/>
            <person name="Arakawa T."/>
            <person name="Banh J."/>
            <person name="Banno F."/>
            <person name="Bowser L."/>
            <person name="Brooks S.Y."/>
            <person name="Carninci P."/>
            <person name="Chao Q."/>
            <person name="Choy N."/>
            <person name="Enju A."/>
            <person name="Goldsmith A.D."/>
            <person name="Gurjal M."/>
            <person name="Hansen N.F."/>
            <person name="Hayashizaki Y."/>
            <person name="Johnson-Hopson C."/>
            <person name="Hsuan V.W."/>
            <person name="Iida K."/>
            <person name="Karnes M."/>
            <person name="Khan S."/>
            <person name="Koesema E."/>
            <person name="Ishida J."/>
            <person name="Jiang P.X."/>
            <person name="Jones T."/>
            <person name="Kawai J."/>
            <person name="Kamiya A."/>
            <person name="Meyers C."/>
            <person name="Nakajima M."/>
            <person name="Narusaka M."/>
            <person name="Seki M."/>
            <person name="Sakurai T."/>
            <person name="Satou M."/>
            <person name="Tamse R."/>
            <person name="Vaysberg M."/>
            <person name="Wallender E.K."/>
            <person name="Wong C."/>
            <person name="Yamamura Y."/>
            <person name="Yuan S."/>
            <person name="Shinozaki K."/>
            <person name="Davis R.W."/>
            <person name="Theologis A."/>
            <person name="Ecker J.R."/>
        </authorList>
    </citation>
    <scope>NUCLEOTIDE SEQUENCE [LARGE SCALE MRNA]</scope>
    <source>
        <strain>cv. Columbia</strain>
    </source>
</reference>
<reference key="5">
    <citation type="submission" date="2002-03" db="EMBL/GenBank/DDBJ databases">
        <title>Full-length cDNA from Arabidopsis thaliana.</title>
        <authorList>
            <person name="Brover V.V."/>
            <person name="Troukhan M.E."/>
            <person name="Alexandrov N.A."/>
            <person name="Lu Y.-P."/>
            <person name="Flavell R.B."/>
            <person name="Feldmann K.A."/>
        </authorList>
    </citation>
    <scope>NUCLEOTIDE SEQUENCE [LARGE SCALE MRNA]</scope>
</reference>
<reference key="6">
    <citation type="journal article" date="2003" name="Biochim. Biophys. Acta">
        <title>Mitochondrial complex I from Arabidopsis and rice: orthologs of mammalian and fungal components coupled with plant-specific subunits.</title>
        <authorList>
            <person name="Heazlewood J.L."/>
            <person name="Howell K.A."/>
            <person name="Millar A.H."/>
        </authorList>
    </citation>
    <scope>SUBCELLULAR LOCATION</scope>
    <scope>IDENTIFICATION BY MASS SPECTROMETRY</scope>
    <scope>SUBUNIT</scope>
</reference>
<reference key="7">
    <citation type="journal article" date="2004" name="Plant Cell">
        <title>Experimental analysis of the Arabidopsis mitochondrial proteome highlights signaling and regulatory components, provides assessment of targeting prediction programs, and indicates plant-specific mitochondrial proteins.</title>
        <authorList>
            <person name="Heazlewood J.L."/>
            <person name="Tonti-Filippini J.S."/>
            <person name="Gout A.M."/>
            <person name="Day D.A."/>
            <person name="Whelan J."/>
            <person name="Millar A.H."/>
        </authorList>
    </citation>
    <scope>IDENTIFICATION BY MASS SPECTROMETRY</scope>
    <scope>SUBCELLULAR LOCATION [LARGE SCALE ANALYSIS]</scope>
    <source>
        <strain>cv. Landsberg erecta</strain>
    </source>
</reference>
<reference key="8">
    <citation type="journal article" date="2007" name="Plant J.">
        <title>Mitochondrial type-I prohibitins of Arabidopsis thaliana are required for supporting proficient meristem development.</title>
        <authorList>
            <person name="Van Aken O."/>
            <person name="Pecenkova T."/>
            <person name="van de Cotte B."/>
            <person name="De Rycke R."/>
            <person name="Eeckhout D."/>
            <person name="Fromm H."/>
            <person name="De Jaeger G."/>
            <person name="Witters E."/>
            <person name="Beemster G.T.S."/>
            <person name="Inze D."/>
            <person name="Van Breusegem F."/>
        </authorList>
    </citation>
    <scope>TISSUE SPECIFICITY</scope>
    <scope>SUBUNIT</scope>
    <scope>SUBCELLULAR LOCATION</scope>
    <scope>IDENTIFICATION BY MASS SPECTROMETRY</scope>
    <source>
        <strain>cv. Columbia</strain>
    </source>
</reference>
<reference key="9">
    <citation type="journal article" date="2008" name="J. Proteome Res.">
        <title>Resolving and identifying protein components of plant mitochondrial respiratory complexes using three dimensions of gel electrophoresis.</title>
        <authorList>
            <person name="Meyer E.H."/>
            <person name="Taylor N.L."/>
            <person name="Millar A.H."/>
        </authorList>
    </citation>
    <scope>IDENTIFICATION BY MASS SPECTROMETRY</scope>
    <scope>SUBCELLULAR LOCATION</scope>
    <scope>SUBUNIT</scope>
</reference>
<reference key="10">
    <citation type="journal article" date="2011" name="Plant Physiol.">
        <title>Defining the protein complex proteome of plant mitochondria.</title>
        <authorList>
            <person name="Klodmann J."/>
            <person name="Senkler M."/>
            <person name="Rode C."/>
            <person name="Braun H.-P."/>
        </authorList>
    </citation>
    <scope>IDENTIFICATION BY MASS SPECTROMETRY</scope>
    <scope>SUBCELLULAR LOCATION [LARGE SCALE ANALYSIS]</scope>
</reference>
<accession>O49460</accession>
<accession>Q8LA39</accession>
<dbReference type="EMBL" id="U66591">
    <property type="protein sequence ID" value="AAD00155.1"/>
    <property type="molecule type" value="mRNA"/>
</dbReference>
<dbReference type="EMBL" id="U66594">
    <property type="protein sequence ID" value="AAD00158.1"/>
    <property type="molecule type" value="Genomic_DNA"/>
</dbReference>
<dbReference type="EMBL" id="AL021749">
    <property type="protein sequence ID" value="CAA16891.1"/>
    <property type="molecule type" value="Genomic_DNA"/>
</dbReference>
<dbReference type="EMBL" id="AL161573">
    <property type="protein sequence ID" value="CAB81439.1"/>
    <property type="molecule type" value="Genomic_DNA"/>
</dbReference>
<dbReference type="EMBL" id="CP002687">
    <property type="protein sequence ID" value="AEE85496.1"/>
    <property type="molecule type" value="Genomic_DNA"/>
</dbReference>
<dbReference type="EMBL" id="AY093228">
    <property type="protein sequence ID" value="AAM13227.1"/>
    <property type="molecule type" value="mRNA"/>
</dbReference>
<dbReference type="EMBL" id="BT000211">
    <property type="protein sequence ID" value="AAN15530.1"/>
    <property type="molecule type" value="mRNA"/>
</dbReference>
<dbReference type="EMBL" id="AY088047">
    <property type="protein sequence ID" value="AAM65593.1"/>
    <property type="molecule type" value="mRNA"/>
</dbReference>
<dbReference type="PIR" id="T04622">
    <property type="entry name" value="T04622"/>
</dbReference>
<dbReference type="RefSeq" id="NP_194580.1">
    <property type="nucleotide sequence ID" value="NM_118993.4"/>
</dbReference>
<dbReference type="SMR" id="O49460"/>
<dbReference type="BioGRID" id="14256">
    <property type="interactions" value="6"/>
</dbReference>
<dbReference type="FunCoup" id="O49460">
    <property type="interactions" value="3780"/>
</dbReference>
<dbReference type="IntAct" id="O49460">
    <property type="interactions" value="4"/>
</dbReference>
<dbReference type="STRING" id="3702.O49460"/>
<dbReference type="PaxDb" id="3702-AT4G28510.1"/>
<dbReference type="ProMEX" id="O49460"/>
<dbReference type="ProteomicsDB" id="236726"/>
<dbReference type="EnsemblPlants" id="AT4G28510.1">
    <property type="protein sequence ID" value="AT4G28510.1"/>
    <property type="gene ID" value="AT4G28510"/>
</dbReference>
<dbReference type="GeneID" id="828969"/>
<dbReference type="Gramene" id="AT4G28510.1">
    <property type="protein sequence ID" value="AT4G28510.1"/>
    <property type="gene ID" value="AT4G28510"/>
</dbReference>
<dbReference type="KEGG" id="ath:AT4G28510"/>
<dbReference type="Araport" id="AT4G28510"/>
<dbReference type="TAIR" id="AT4G28510">
    <property type="gene designation" value="PHB1"/>
</dbReference>
<dbReference type="eggNOG" id="KOG3090">
    <property type="taxonomic scope" value="Eukaryota"/>
</dbReference>
<dbReference type="HOGENOM" id="CLU_047969_0_2_1"/>
<dbReference type="InParanoid" id="O49460"/>
<dbReference type="OMA" id="NEGTHFQ"/>
<dbReference type="OrthoDB" id="275637at2759"/>
<dbReference type="PhylomeDB" id="O49460"/>
<dbReference type="CD-CODE" id="4299E36E">
    <property type="entry name" value="Nucleolus"/>
</dbReference>
<dbReference type="PRO" id="PR:O49460"/>
<dbReference type="Proteomes" id="UP000006548">
    <property type="component" value="Chromosome 4"/>
</dbReference>
<dbReference type="ExpressionAtlas" id="O49460">
    <property type="expression patterns" value="baseline and differential"/>
</dbReference>
<dbReference type="GO" id="GO:0005743">
    <property type="term" value="C:mitochondrial inner membrane"/>
    <property type="evidence" value="ECO:0007669"/>
    <property type="project" value="UniProtKB-SubCell"/>
</dbReference>
<dbReference type="GO" id="GO:0005739">
    <property type="term" value="C:mitochondrion"/>
    <property type="evidence" value="ECO:0000314"/>
    <property type="project" value="TAIR"/>
</dbReference>
<dbReference type="GO" id="GO:0000325">
    <property type="term" value="C:plant-type vacuole"/>
    <property type="evidence" value="ECO:0007005"/>
    <property type="project" value="TAIR"/>
</dbReference>
<dbReference type="CDD" id="cd03401">
    <property type="entry name" value="SPFH_prohibitin"/>
    <property type="match status" value="1"/>
</dbReference>
<dbReference type="FunFam" id="3.30.479.30:FF:000001">
    <property type="entry name" value="Prohibitin 2"/>
    <property type="match status" value="1"/>
</dbReference>
<dbReference type="Gene3D" id="3.30.479.30">
    <property type="entry name" value="Band 7 domain"/>
    <property type="match status" value="1"/>
</dbReference>
<dbReference type="InterPro" id="IPR001107">
    <property type="entry name" value="Band_7"/>
</dbReference>
<dbReference type="InterPro" id="IPR036013">
    <property type="entry name" value="Band_7/SPFH_dom_sf"/>
</dbReference>
<dbReference type="InterPro" id="IPR000163">
    <property type="entry name" value="Prohibitin"/>
</dbReference>
<dbReference type="PANTHER" id="PTHR23222">
    <property type="entry name" value="PROHIBITIN"/>
    <property type="match status" value="1"/>
</dbReference>
<dbReference type="PANTHER" id="PTHR23222:SF1">
    <property type="entry name" value="PROHIBITIN-2"/>
    <property type="match status" value="1"/>
</dbReference>
<dbReference type="Pfam" id="PF01145">
    <property type="entry name" value="Band_7"/>
    <property type="match status" value="1"/>
</dbReference>
<dbReference type="PRINTS" id="PR00679">
    <property type="entry name" value="PROHIBITIN"/>
</dbReference>
<dbReference type="SMART" id="SM00244">
    <property type="entry name" value="PHB"/>
    <property type="match status" value="1"/>
</dbReference>
<dbReference type="SUPFAM" id="SSF117892">
    <property type="entry name" value="Band 7/SPFH domain"/>
    <property type="match status" value="1"/>
</dbReference>
<keyword id="KW-0175">Coiled coil</keyword>
<keyword id="KW-0472">Membrane</keyword>
<keyword id="KW-0496">Mitochondrion</keyword>
<keyword id="KW-0999">Mitochondrion inner membrane</keyword>
<keyword id="KW-1185">Reference proteome</keyword>
<keyword id="KW-0735">Signal-anchor</keyword>
<keyword id="KW-0812">Transmembrane</keyword>
<keyword id="KW-1133">Transmembrane helix</keyword>
<evidence type="ECO:0000250" key="1"/>
<evidence type="ECO:0000255" key="2"/>
<evidence type="ECO:0000269" key="3">
    <source>
    </source>
</evidence>
<evidence type="ECO:0000269" key="4">
    <source>
    </source>
</evidence>
<evidence type="ECO:0000269" key="5">
    <source>
    </source>
</evidence>
<evidence type="ECO:0000269" key="6">
    <source>
    </source>
</evidence>
<evidence type="ECO:0000269" key="7">
    <source>
    </source>
</evidence>
<evidence type="ECO:0000305" key="8"/>
<protein>
    <recommendedName>
        <fullName>Prohibitin-1, mitochondrial</fullName>
        <shortName>Atphb1</shortName>
    </recommendedName>
</protein>
<organism>
    <name type="scientific">Arabidopsis thaliana</name>
    <name type="common">Mouse-ear cress</name>
    <dbReference type="NCBI Taxonomy" id="3702"/>
    <lineage>
        <taxon>Eukaryota</taxon>
        <taxon>Viridiplantae</taxon>
        <taxon>Streptophyta</taxon>
        <taxon>Embryophyta</taxon>
        <taxon>Tracheophyta</taxon>
        <taxon>Spermatophyta</taxon>
        <taxon>Magnoliopsida</taxon>
        <taxon>eudicotyledons</taxon>
        <taxon>Gunneridae</taxon>
        <taxon>Pentapetalae</taxon>
        <taxon>rosids</taxon>
        <taxon>malvids</taxon>
        <taxon>Brassicales</taxon>
        <taxon>Brassicaceae</taxon>
        <taxon>Camelineae</taxon>
        <taxon>Arabidopsis</taxon>
    </lineage>
</organism>
<proteinExistence type="evidence at protein level"/>
<gene>
    <name type="primary">PHB1</name>
    <name type="ordered locus">At4g28510</name>
    <name type="ORF">F20O9.200</name>
</gene>
<name>PHB1_ARATH</name>